<protein>
    <recommendedName>
        <fullName>Leptin receptor</fullName>
        <shortName>LEP-R</shortName>
    </recommendedName>
    <alternativeName>
        <fullName>HuB219</fullName>
    </alternativeName>
    <alternativeName>
        <fullName>OB receptor</fullName>
        <shortName>OB-R</shortName>
    </alternativeName>
    <cdAntigenName>CD295</cdAntigenName>
</protein>
<dbReference type="EMBL" id="U43168">
    <property type="protein sequence ID" value="AAA93015.1"/>
    <property type="molecule type" value="mRNA"/>
</dbReference>
<dbReference type="EMBL" id="U66495">
    <property type="protein sequence ID" value="AAB07495.1"/>
    <property type="molecule type" value="mRNA"/>
</dbReference>
<dbReference type="EMBL" id="U66496">
    <property type="protein sequence ID" value="AAB07496.1"/>
    <property type="molecule type" value="mRNA"/>
</dbReference>
<dbReference type="EMBL" id="U66497">
    <property type="protein sequence ID" value="AAB07497.1"/>
    <property type="molecule type" value="mRNA"/>
</dbReference>
<dbReference type="EMBL" id="U52912">
    <property type="protein sequence ID" value="AAC50509.1"/>
    <property type="molecule type" value="mRNA"/>
</dbReference>
<dbReference type="EMBL" id="U52913">
    <property type="protein sequence ID" value="AAC50510.1"/>
    <property type="molecule type" value="mRNA"/>
</dbReference>
<dbReference type="EMBL" id="U52914">
    <property type="protein sequence ID" value="AAC50511.1"/>
    <property type="molecule type" value="mRNA"/>
</dbReference>
<dbReference type="EMBL" id="U59263">
    <property type="protein sequence ID" value="AAB09673.1"/>
    <property type="molecule type" value="Genomic_DNA"/>
</dbReference>
<dbReference type="EMBL" id="U59248">
    <property type="protein sequence ID" value="AAB09673.1"/>
    <property type="status" value="JOINED"/>
    <property type="molecule type" value="Genomic_DNA"/>
</dbReference>
<dbReference type="EMBL" id="U59249">
    <property type="protein sequence ID" value="AAB09673.1"/>
    <property type="status" value="JOINED"/>
    <property type="molecule type" value="Genomic_DNA"/>
</dbReference>
<dbReference type="EMBL" id="U59250">
    <property type="protein sequence ID" value="AAB09673.1"/>
    <property type="status" value="JOINED"/>
    <property type="molecule type" value="Genomic_DNA"/>
</dbReference>
<dbReference type="EMBL" id="U59252">
    <property type="protein sequence ID" value="AAB09673.1"/>
    <property type="status" value="JOINED"/>
    <property type="molecule type" value="Genomic_DNA"/>
</dbReference>
<dbReference type="EMBL" id="U59253">
    <property type="protein sequence ID" value="AAB09673.1"/>
    <property type="status" value="JOINED"/>
    <property type="molecule type" value="Genomic_DNA"/>
</dbReference>
<dbReference type="EMBL" id="U59254">
    <property type="protein sequence ID" value="AAB09673.1"/>
    <property type="status" value="JOINED"/>
    <property type="molecule type" value="Genomic_DNA"/>
</dbReference>
<dbReference type="EMBL" id="U59255">
    <property type="protein sequence ID" value="AAB09673.1"/>
    <property type="status" value="JOINED"/>
    <property type="molecule type" value="Genomic_DNA"/>
</dbReference>
<dbReference type="EMBL" id="U59256">
    <property type="protein sequence ID" value="AAB09673.1"/>
    <property type="status" value="JOINED"/>
    <property type="molecule type" value="Genomic_DNA"/>
</dbReference>
<dbReference type="EMBL" id="U59257">
    <property type="protein sequence ID" value="AAB09673.1"/>
    <property type="status" value="JOINED"/>
    <property type="molecule type" value="Genomic_DNA"/>
</dbReference>
<dbReference type="EMBL" id="U59258">
    <property type="protein sequence ID" value="AAB09673.1"/>
    <property type="status" value="JOINED"/>
    <property type="molecule type" value="Genomic_DNA"/>
</dbReference>
<dbReference type="EMBL" id="U59259">
    <property type="protein sequence ID" value="AAB09673.1"/>
    <property type="status" value="JOINED"/>
    <property type="molecule type" value="Genomic_DNA"/>
</dbReference>
<dbReference type="EMBL" id="U59260">
    <property type="protein sequence ID" value="AAB09673.1"/>
    <property type="status" value="JOINED"/>
    <property type="molecule type" value="Genomic_DNA"/>
</dbReference>
<dbReference type="EMBL" id="U59261">
    <property type="protein sequence ID" value="AAB09673.1"/>
    <property type="status" value="JOINED"/>
    <property type="molecule type" value="Genomic_DNA"/>
</dbReference>
<dbReference type="EMBL" id="U59262">
    <property type="protein sequence ID" value="AAB09673.1"/>
    <property type="status" value="JOINED"/>
    <property type="molecule type" value="Genomic_DNA"/>
</dbReference>
<dbReference type="EMBL" id="U50748">
    <property type="protein sequence ID" value="AAC23650.1"/>
    <property type="molecule type" value="mRNA"/>
</dbReference>
<dbReference type="CCDS" id="CCDS30740.1">
    <molecule id="P48357-2"/>
</dbReference>
<dbReference type="CCDS" id="CCDS30741.1">
    <molecule id="P48357-3"/>
</dbReference>
<dbReference type="CCDS" id="CCDS55604.1">
    <molecule id="P48357-4"/>
</dbReference>
<dbReference type="CCDS" id="CCDS631.1">
    <molecule id="P48357-1"/>
</dbReference>
<dbReference type="RefSeq" id="NP_001003679.1">
    <molecule id="P48357-2"/>
    <property type="nucleotide sequence ID" value="NM_001003679.3"/>
</dbReference>
<dbReference type="RefSeq" id="NP_001003680.1">
    <molecule id="P48357-3"/>
    <property type="nucleotide sequence ID" value="NM_001003680.3"/>
</dbReference>
<dbReference type="RefSeq" id="NP_001185616.1">
    <molecule id="P48357-3"/>
    <property type="nucleotide sequence ID" value="NM_001198687.2"/>
</dbReference>
<dbReference type="RefSeq" id="NP_001185617.1">
    <molecule id="P48357-4"/>
    <property type="nucleotide sequence ID" value="NM_001198688.1"/>
</dbReference>
<dbReference type="RefSeq" id="NP_001185618.1">
    <molecule id="P48357-2"/>
    <property type="nucleotide sequence ID" value="NM_001198689.2"/>
</dbReference>
<dbReference type="RefSeq" id="NP_002294.2">
    <molecule id="P48357-1"/>
    <property type="nucleotide sequence ID" value="NM_002303.5"/>
</dbReference>
<dbReference type="PDB" id="3V6O">
    <property type="method" value="X-ray"/>
    <property type="resolution" value="1.95 A"/>
    <property type="chains" value="A/B=428-633"/>
</dbReference>
<dbReference type="PDB" id="6E2P">
    <property type="method" value="X-ray"/>
    <property type="resolution" value="2.83 A"/>
    <property type="chains" value="C/D=863-933"/>
</dbReference>
<dbReference type="PDB" id="7Z3Q">
    <property type="method" value="X-ray"/>
    <property type="resolution" value="3.62 A"/>
    <property type="chains" value="B/D/F=428-635"/>
</dbReference>
<dbReference type="PDB" id="8AVE">
    <property type="method" value="EM"/>
    <property type="resolution" value="5.62 A"/>
    <property type="chains" value="B/D=22-839"/>
</dbReference>
<dbReference type="PDB" id="8AVF">
    <property type="method" value="EM"/>
    <property type="resolution" value="6.45 A"/>
    <property type="chains" value="B/D/F=22-839"/>
</dbReference>
<dbReference type="PDB" id="8AVO">
    <property type="method" value="EM"/>
    <property type="resolution" value="6.84 A"/>
    <property type="chains" value="B/D/F=22-839"/>
</dbReference>
<dbReference type="PDB" id="8X80">
    <property type="method" value="EM"/>
    <property type="resolution" value="3.88 A"/>
    <property type="chains" value="A/B/C=21-839"/>
</dbReference>
<dbReference type="PDB" id="8X81">
    <property type="method" value="EM"/>
    <property type="resolution" value="3.77 A"/>
    <property type="chains" value="A/B/C=21-839"/>
</dbReference>
<dbReference type="PDB" id="8X85">
    <property type="method" value="EM"/>
    <property type="resolution" value="3.58 A"/>
    <property type="chains" value="A/B=21-839"/>
</dbReference>
<dbReference type="PDBsum" id="3V6O"/>
<dbReference type="PDBsum" id="6E2P"/>
<dbReference type="PDBsum" id="7Z3Q"/>
<dbReference type="PDBsum" id="8AVE"/>
<dbReference type="PDBsum" id="8AVF"/>
<dbReference type="PDBsum" id="8AVO"/>
<dbReference type="PDBsum" id="8X80"/>
<dbReference type="PDBsum" id="8X81"/>
<dbReference type="PDBsum" id="8X85"/>
<dbReference type="EMDB" id="EMD-15680"/>
<dbReference type="EMDB" id="EMD-15681"/>
<dbReference type="EMDB" id="EMD-15683"/>
<dbReference type="EMDB" id="EMD-38131"/>
<dbReference type="EMDB" id="EMD-38132"/>
<dbReference type="EMDB" id="EMD-38136"/>
<dbReference type="SMR" id="P48357"/>
<dbReference type="BioGRID" id="110144">
    <property type="interactions" value="32"/>
</dbReference>
<dbReference type="CORUM" id="P48357"/>
<dbReference type="DIP" id="DIP-6117N"/>
<dbReference type="FunCoup" id="P48357">
    <property type="interactions" value="1058"/>
</dbReference>
<dbReference type="IntAct" id="P48357">
    <property type="interactions" value="26"/>
</dbReference>
<dbReference type="MINT" id="P48357"/>
<dbReference type="STRING" id="9606.ENSP00000330393"/>
<dbReference type="ChEMBL" id="CHEMBL5913"/>
<dbReference type="DrugBank" id="DB05098">
    <property type="generic name" value="Leptin"/>
</dbReference>
<dbReference type="DrugBank" id="DB09046">
    <property type="generic name" value="Metreleptin"/>
</dbReference>
<dbReference type="DrugCentral" id="P48357"/>
<dbReference type="GlyConnect" id="1954">
    <property type="glycosylation" value="17 N-Linked glycans (8 sites)"/>
</dbReference>
<dbReference type="GlyCosmos" id="P48357">
    <property type="glycosylation" value="19 sites, 17 glycans"/>
</dbReference>
<dbReference type="GlyGen" id="P48357">
    <property type="glycosylation" value="20 sites, 22 N-linked glycans (13 sites)"/>
</dbReference>
<dbReference type="iPTMnet" id="P48357"/>
<dbReference type="PhosphoSitePlus" id="P48357"/>
<dbReference type="BioMuta" id="LEPR"/>
<dbReference type="DMDM" id="116242617"/>
<dbReference type="jPOST" id="P48357"/>
<dbReference type="MassIVE" id="P48357"/>
<dbReference type="PaxDb" id="9606-ENSP00000330393"/>
<dbReference type="PeptideAtlas" id="P48357"/>
<dbReference type="ProteomicsDB" id="55876">
    <molecule id="P48357-1"/>
</dbReference>
<dbReference type="ProteomicsDB" id="55877">
    <molecule id="P48357-2"/>
</dbReference>
<dbReference type="ProteomicsDB" id="55878">
    <molecule id="P48357-3"/>
</dbReference>
<dbReference type="ProteomicsDB" id="55879">
    <molecule id="P48357-4"/>
</dbReference>
<dbReference type="ProteomicsDB" id="55880">
    <molecule id="P48357-5"/>
</dbReference>
<dbReference type="Pumba" id="P48357"/>
<dbReference type="ABCD" id="P48357">
    <property type="antibodies" value="1 sequenced antibody"/>
</dbReference>
<dbReference type="Antibodypedia" id="33374">
    <property type="antibodies" value="880 antibodies from 43 providers"/>
</dbReference>
<dbReference type="DNASU" id="3953"/>
<dbReference type="Ensembl" id="ENST00000344610.12">
    <molecule id="P48357-4"/>
    <property type="protein sequence ID" value="ENSP00000340884.8"/>
    <property type="gene ID" value="ENSG00000116678.20"/>
</dbReference>
<dbReference type="Ensembl" id="ENST00000349533.11">
    <molecule id="P48357-1"/>
    <property type="protein sequence ID" value="ENSP00000330393.7"/>
    <property type="gene ID" value="ENSG00000116678.20"/>
</dbReference>
<dbReference type="Ensembl" id="ENST00000371058.1">
    <molecule id="P48357-4"/>
    <property type="protein sequence ID" value="ENSP00000360097.1"/>
    <property type="gene ID" value="ENSG00000116678.20"/>
</dbReference>
<dbReference type="Ensembl" id="ENST00000371059.7">
    <molecule id="P48357-3"/>
    <property type="protein sequence ID" value="ENSP00000360098.3"/>
    <property type="gene ID" value="ENSG00000116678.20"/>
</dbReference>
<dbReference type="Ensembl" id="ENST00000371060.7">
    <molecule id="P48357-2"/>
    <property type="protein sequence ID" value="ENSP00000360099.3"/>
    <property type="gene ID" value="ENSG00000116678.20"/>
</dbReference>
<dbReference type="Ensembl" id="ENST00000616738.4">
    <molecule id="P48357-2"/>
    <property type="protein sequence ID" value="ENSP00000483390.1"/>
    <property type="gene ID" value="ENSG00000116678.20"/>
</dbReference>
<dbReference type="GeneID" id="3953"/>
<dbReference type="KEGG" id="hsa:3953"/>
<dbReference type="MANE-Select" id="ENST00000349533.11">
    <property type="protein sequence ID" value="ENSP00000330393.7"/>
    <property type="RefSeq nucleotide sequence ID" value="NM_002303.6"/>
    <property type="RefSeq protein sequence ID" value="NP_002294.2"/>
</dbReference>
<dbReference type="UCSC" id="uc001dcg.4">
    <molecule id="P48357-1"/>
    <property type="organism name" value="human"/>
</dbReference>
<dbReference type="AGR" id="HGNC:6554"/>
<dbReference type="CTD" id="3953"/>
<dbReference type="DisGeNET" id="3953"/>
<dbReference type="GeneCards" id="LEPR"/>
<dbReference type="HGNC" id="HGNC:6554">
    <property type="gene designation" value="LEPR"/>
</dbReference>
<dbReference type="HPA" id="ENSG00000116678">
    <property type="expression patterns" value="Tissue enriched (liver)"/>
</dbReference>
<dbReference type="MalaCards" id="LEPR"/>
<dbReference type="MIM" id="601007">
    <property type="type" value="gene"/>
</dbReference>
<dbReference type="MIM" id="614963">
    <property type="type" value="phenotype"/>
</dbReference>
<dbReference type="neXtProt" id="NX_P48357"/>
<dbReference type="OpenTargets" id="ENSG00000116678"/>
<dbReference type="Orphanet" id="179494">
    <property type="disease" value="Obesity due to leptin receptor gene deficiency"/>
</dbReference>
<dbReference type="PharmGKB" id="PA229"/>
<dbReference type="VEuPathDB" id="HostDB:ENSG00000116678"/>
<dbReference type="eggNOG" id="ENOG502RK5B">
    <property type="taxonomic scope" value="Eukaryota"/>
</dbReference>
<dbReference type="GeneTree" id="ENSGT00730000111209"/>
<dbReference type="HOGENOM" id="CLU_008491_0_0_1"/>
<dbReference type="InParanoid" id="P48357"/>
<dbReference type="OMA" id="FPPHCLF"/>
<dbReference type="OrthoDB" id="8964127at2759"/>
<dbReference type="PAN-GO" id="P48357">
    <property type="GO annotations" value="6 GO annotations based on evolutionary models"/>
</dbReference>
<dbReference type="PhylomeDB" id="P48357"/>
<dbReference type="TreeFam" id="TF106501"/>
<dbReference type="PathwayCommons" id="P48357"/>
<dbReference type="Reactome" id="R-HSA-2586552">
    <molecule id="P48357-1"/>
    <property type="pathway name" value="Signaling by Leptin"/>
</dbReference>
<dbReference type="SignaLink" id="P48357"/>
<dbReference type="SIGNOR" id="P48357"/>
<dbReference type="BioGRID-ORCS" id="3953">
    <property type="hits" value="13 hits in 1155 CRISPR screens"/>
</dbReference>
<dbReference type="ChiTaRS" id="LEPR">
    <property type="organism name" value="human"/>
</dbReference>
<dbReference type="EvolutionaryTrace" id="P48357"/>
<dbReference type="GeneWiki" id="Leptin_receptor"/>
<dbReference type="GenomeRNAi" id="3953"/>
<dbReference type="Pharos" id="P48357">
    <property type="development level" value="Tclin"/>
</dbReference>
<dbReference type="PRO" id="PR:P48357"/>
<dbReference type="Proteomes" id="UP000005640">
    <property type="component" value="Chromosome 1"/>
</dbReference>
<dbReference type="RNAct" id="P48357">
    <property type="molecule type" value="protein"/>
</dbReference>
<dbReference type="Bgee" id="ENSG00000116678">
    <property type="expression patterns" value="Expressed in trabecular bone tissue and 198 other cell types or tissues"/>
</dbReference>
<dbReference type="GO" id="GO:0016323">
    <property type="term" value="C:basolateral plasma membrane"/>
    <property type="evidence" value="ECO:0007669"/>
    <property type="project" value="UniProtKB-SubCell"/>
</dbReference>
<dbReference type="GO" id="GO:0009897">
    <property type="term" value="C:external side of plasma membrane"/>
    <property type="evidence" value="ECO:0000318"/>
    <property type="project" value="GO_Central"/>
</dbReference>
<dbReference type="GO" id="GO:0005576">
    <property type="term" value="C:extracellular region"/>
    <property type="evidence" value="ECO:0007669"/>
    <property type="project" value="UniProtKB-SubCell"/>
</dbReference>
<dbReference type="GO" id="GO:0043235">
    <property type="term" value="C:receptor complex"/>
    <property type="evidence" value="ECO:0000314"/>
    <property type="project" value="MGI"/>
</dbReference>
<dbReference type="GO" id="GO:0019955">
    <property type="term" value="F:cytokine binding"/>
    <property type="evidence" value="ECO:0000318"/>
    <property type="project" value="GO_Central"/>
</dbReference>
<dbReference type="GO" id="GO:0004896">
    <property type="term" value="F:cytokine receptor activity"/>
    <property type="evidence" value="ECO:0000318"/>
    <property type="project" value="GO_Central"/>
</dbReference>
<dbReference type="GO" id="GO:0042802">
    <property type="term" value="F:identical protein binding"/>
    <property type="evidence" value="ECO:0000353"/>
    <property type="project" value="IntAct"/>
</dbReference>
<dbReference type="GO" id="GO:0038021">
    <property type="term" value="F:leptin receptor activity"/>
    <property type="evidence" value="ECO:0000314"/>
    <property type="project" value="ARUK-UCL"/>
</dbReference>
<dbReference type="GO" id="GO:0017046">
    <property type="term" value="F:peptide hormone binding"/>
    <property type="evidence" value="ECO:0000353"/>
    <property type="project" value="ARUK-UCL"/>
</dbReference>
<dbReference type="GO" id="GO:0004888">
    <property type="term" value="F:transmembrane signaling receptor activity"/>
    <property type="evidence" value="ECO:0000304"/>
    <property type="project" value="ProtInc"/>
</dbReference>
<dbReference type="GO" id="GO:0001525">
    <property type="term" value="P:angiogenesis"/>
    <property type="evidence" value="ECO:0000315"/>
    <property type="project" value="UniProtKB"/>
</dbReference>
<dbReference type="GO" id="GO:0098868">
    <property type="term" value="P:bone growth"/>
    <property type="evidence" value="ECO:0000250"/>
    <property type="project" value="UniProtKB"/>
</dbReference>
<dbReference type="GO" id="GO:0007166">
    <property type="term" value="P:cell surface receptor signaling pathway"/>
    <property type="evidence" value="ECO:0000304"/>
    <property type="project" value="ProtInc"/>
</dbReference>
<dbReference type="GO" id="GO:0097696">
    <property type="term" value="P:cell surface receptor signaling pathway via STAT"/>
    <property type="evidence" value="ECO:0000314"/>
    <property type="project" value="ARUK-UCL"/>
</dbReference>
<dbReference type="GO" id="GO:0008203">
    <property type="term" value="P:cholesterol metabolic process"/>
    <property type="evidence" value="ECO:0007669"/>
    <property type="project" value="Ensembl"/>
</dbReference>
<dbReference type="GO" id="GO:0019221">
    <property type="term" value="P:cytokine-mediated signaling pathway"/>
    <property type="evidence" value="ECO:0000318"/>
    <property type="project" value="GO_Central"/>
</dbReference>
<dbReference type="GO" id="GO:0097009">
    <property type="term" value="P:energy homeostasis"/>
    <property type="evidence" value="ECO:0000250"/>
    <property type="project" value="UniProtKB"/>
</dbReference>
<dbReference type="GO" id="GO:0006112">
    <property type="term" value="P:energy reserve metabolic process"/>
    <property type="evidence" value="ECO:0000304"/>
    <property type="project" value="ProtInc"/>
</dbReference>
<dbReference type="GO" id="GO:0014009">
    <property type="term" value="P:glial cell proliferation"/>
    <property type="evidence" value="ECO:0007669"/>
    <property type="project" value="Ensembl"/>
</dbReference>
<dbReference type="GO" id="GO:0006094">
    <property type="term" value="P:gluconeogenesis"/>
    <property type="evidence" value="ECO:0007669"/>
    <property type="project" value="Ensembl"/>
</dbReference>
<dbReference type="GO" id="GO:0042593">
    <property type="term" value="P:glucose homeostasis"/>
    <property type="evidence" value="ECO:0000250"/>
    <property type="project" value="UniProtKB"/>
</dbReference>
<dbReference type="GO" id="GO:0005977">
    <property type="term" value="P:glycogen metabolic process"/>
    <property type="evidence" value="ECO:0007669"/>
    <property type="project" value="Ensembl"/>
</dbReference>
<dbReference type="GO" id="GO:0033210">
    <property type="term" value="P:leptin-mediated signaling pathway"/>
    <property type="evidence" value="ECO:0000314"/>
    <property type="project" value="ARUK-UCL"/>
</dbReference>
<dbReference type="GO" id="GO:0007275">
    <property type="term" value="P:multicellular organism development"/>
    <property type="evidence" value="ECO:0000304"/>
    <property type="project" value="ProtInc"/>
</dbReference>
<dbReference type="GO" id="GO:0010507">
    <property type="term" value="P:negative regulation of autophagy"/>
    <property type="evidence" value="ECO:0000314"/>
    <property type="project" value="UniProtKB"/>
</dbReference>
<dbReference type="GO" id="GO:0045721">
    <property type="term" value="P:negative regulation of gluconeogenesis"/>
    <property type="evidence" value="ECO:0007669"/>
    <property type="project" value="Ensembl"/>
</dbReference>
<dbReference type="GO" id="GO:0006909">
    <property type="term" value="P:phagocytosis"/>
    <property type="evidence" value="ECO:0007669"/>
    <property type="project" value="Ensembl"/>
</dbReference>
<dbReference type="GO" id="GO:0008284">
    <property type="term" value="P:positive regulation of cell population proliferation"/>
    <property type="evidence" value="ECO:0000318"/>
    <property type="project" value="GO_Central"/>
</dbReference>
<dbReference type="GO" id="GO:0120162">
    <property type="term" value="P:positive regulation of cold-induced thermogenesis"/>
    <property type="evidence" value="ECO:0000250"/>
    <property type="project" value="YuBioLab"/>
</dbReference>
<dbReference type="GO" id="GO:0046850">
    <property type="term" value="P:regulation of bone remodeling"/>
    <property type="evidence" value="ECO:0000250"/>
    <property type="project" value="UniProtKB"/>
</dbReference>
<dbReference type="GO" id="GO:0060259">
    <property type="term" value="P:regulation of feeding behavior"/>
    <property type="evidence" value="ECO:0000250"/>
    <property type="project" value="UniProtKB"/>
</dbReference>
<dbReference type="GO" id="GO:0051049">
    <property type="term" value="P:regulation of transport"/>
    <property type="evidence" value="ECO:0000314"/>
    <property type="project" value="ARUK-UCL"/>
</dbReference>
<dbReference type="GO" id="GO:0044321">
    <property type="term" value="P:response to leptin"/>
    <property type="evidence" value="ECO:0000250"/>
    <property type="project" value="UniProtKB"/>
</dbReference>
<dbReference type="GO" id="GO:0019953">
    <property type="term" value="P:sexual reproduction"/>
    <property type="evidence" value="ECO:0000250"/>
    <property type="project" value="UniProtKB"/>
</dbReference>
<dbReference type="GO" id="GO:0030217">
    <property type="term" value="P:T cell differentiation"/>
    <property type="evidence" value="ECO:0000250"/>
    <property type="project" value="UniProtKB"/>
</dbReference>
<dbReference type="GO" id="GO:0150104">
    <property type="term" value="P:transport across blood-brain barrier"/>
    <property type="evidence" value="ECO:0000303"/>
    <property type="project" value="ARUK-UCL"/>
</dbReference>
<dbReference type="CDD" id="cd00063">
    <property type="entry name" value="FN3"/>
    <property type="match status" value="3"/>
</dbReference>
<dbReference type="FunFam" id="2.60.40.10:FF:000494">
    <property type="entry name" value="Leptin receptor"/>
    <property type="match status" value="1"/>
</dbReference>
<dbReference type="FunFam" id="2.60.40.10:FF:000501">
    <property type="entry name" value="Leptin receptor"/>
    <property type="match status" value="1"/>
</dbReference>
<dbReference type="FunFam" id="2.60.40.10:FF:000515">
    <property type="entry name" value="Leptin receptor"/>
    <property type="match status" value="1"/>
</dbReference>
<dbReference type="FunFam" id="2.60.40.10:FF:000558">
    <property type="entry name" value="Leptin receptor"/>
    <property type="match status" value="1"/>
</dbReference>
<dbReference type="FunFam" id="2.60.40.10:FF:000568">
    <property type="entry name" value="Leptin receptor"/>
    <property type="match status" value="1"/>
</dbReference>
<dbReference type="FunFam" id="2.60.40.10:FF:000613">
    <property type="entry name" value="Leptin receptor"/>
    <property type="match status" value="1"/>
</dbReference>
<dbReference type="FunFam" id="2.60.40.10:FF:000688">
    <property type="entry name" value="Leptin receptor"/>
    <property type="match status" value="1"/>
</dbReference>
<dbReference type="Gene3D" id="2.60.40.10">
    <property type="entry name" value="Immunoglobulins"/>
    <property type="match status" value="7"/>
</dbReference>
<dbReference type="InterPro" id="IPR003961">
    <property type="entry name" value="FN3_dom"/>
</dbReference>
<dbReference type="InterPro" id="IPR036116">
    <property type="entry name" value="FN3_sf"/>
</dbReference>
<dbReference type="InterPro" id="IPR003529">
    <property type="entry name" value="Hematopoietin_rcpt_Gp130_CS"/>
</dbReference>
<dbReference type="InterPro" id="IPR003531">
    <property type="entry name" value="Hempt_rcpt_S_F1_CS"/>
</dbReference>
<dbReference type="InterPro" id="IPR007110">
    <property type="entry name" value="Ig-like_dom"/>
</dbReference>
<dbReference type="InterPro" id="IPR013783">
    <property type="entry name" value="Ig-like_fold"/>
</dbReference>
<dbReference type="InterPro" id="IPR010457">
    <property type="entry name" value="IgC2-like_lig-bd"/>
</dbReference>
<dbReference type="InterPro" id="IPR041182">
    <property type="entry name" value="LEP-R_IGD"/>
</dbReference>
<dbReference type="PANTHER" id="PTHR23037">
    <property type="entry name" value="CYTOKINE RECEPTOR"/>
    <property type="match status" value="1"/>
</dbReference>
<dbReference type="PANTHER" id="PTHR23037:SF44">
    <property type="entry name" value="LEPTIN RECEPTOR"/>
    <property type="match status" value="1"/>
</dbReference>
<dbReference type="Pfam" id="PF00041">
    <property type="entry name" value="fn3"/>
    <property type="match status" value="1"/>
</dbReference>
<dbReference type="Pfam" id="PF06328">
    <property type="entry name" value="Lep_receptor_Ig"/>
    <property type="match status" value="1"/>
</dbReference>
<dbReference type="Pfam" id="PF18589">
    <property type="entry name" value="ObR_Ig"/>
    <property type="match status" value="2"/>
</dbReference>
<dbReference type="SMART" id="SM00060">
    <property type="entry name" value="FN3"/>
    <property type="match status" value="4"/>
</dbReference>
<dbReference type="SUPFAM" id="SSF49265">
    <property type="entry name" value="Fibronectin type III"/>
    <property type="match status" value="4"/>
</dbReference>
<dbReference type="PROSITE" id="PS50853">
    <property type="entry name" value="FN3"/>
    <property type="match status" value="3"/>
</dbReference>
<dbReference type="PROSITE" id="PS01353">
    <property type="entry name" value="HEMATOPO_REC_L_F2"/>
    <property type="match status" value="1"/>
</dbReference>
<dbReference type="PROSITE" id="PS50835">
    <property type="entry name" value="IG_LIKE"/>
    <property type="match status" value="1"/>
</dbReference>
<feature type="signal peptide">
    <location>
        <begin position="1"/>
        <end position="21"/>
    </location>
</feature>
<feature type="chain" id="PRO_0000010904" description="Leptin receptor">
    <location>
        <begin position="22"/>
        <end position="1165"/>
    </location>
</feature>
<feature type="topological domain" description="Extracellular" evidence="2">
    <location>
        <begin position="22"/>
        <end position="839"/>
    </location>
</feature>
<feature type="transmembrane region" description="Helical" evidence="2">
    <location>
        <begin position="840"/>
        <end position="862"/>
    </location>
</feature>
<feature type="topological domain" description="Cytoplasmic" evidence="2">
    <location>
        <begin position="863"/>
        <end position="1165"/>
    </location>
</feature>
<feature type="domain" description="Fibronectin type-III 1" evidence="3">
    <location>
        <begin position="239"/>
        <end position="333"/>
    </location>
</feature>
<feature type="domain" description="Ig-like">
    <location>
        <begin position="331"/>
        <end position="429"/>
    </location>
</feature>
<feature type="domain" description="Fibronectin type-III 2" evidence="3">
    <location>
        <begin position="539"/>
        <end position="634"/>
    </location>
</feature>
<feature type="domain" description="Fibronectin type-III 3" evidence="3">
    <location>
        <begin position="639"/>
        <end position="732"/>
    </location>
</feature>
<feature type="domain" description="Fibronectin type-III 4" evidence="3">
    <location>
        <begin position="740"/>
        <end position="833"/>
    </location>
</feature>
<feature type="region of interest" description="Leptin-binding" evidence="28">
    <location>
        <begin position="467"/>
        <end position="484"/>
    </location>
</feature>
<feature type="region of interest" description="Required for JAK2 activation" evidence="1">
    <location>
        <begin position="893"/>
        <end position="898"/>
    </location>
</feature>
<feature type="region of interest" description="Required for STAT3 phosphorylation" evidence="1">
    <location>
        <begin position="898"/>
        <end position="906"/>
    </location>
</feature>
<feature type="short sequence motif" description="WSXWS motif">
    <location>
        <begin position="622"/>
        <end position="626"/>
    </location>
</feature>
<feature type="short sequence motif" description="Box 1 motif">
    <location>
        <begin position="871"/>
        <end position="879"/>
    </location>
</feature>
<feature type="modified residue" description="Phosphoserine" evidence="30">
    <location>
        <position position="882"/>
    </location>
</feature>
<feature type="modified residue" description="Phosphotyrosine; by JAK2" evidence="1">
    <location>
        <position position="986"/>
    </location>
</feature>
<feature type="modified residue" description="Phosphotyrosine" evidence="1">
    <location>
        <position position="1079"/>
    </location>
</feature>
<feature type="modified residue" description="Phosphotyrosine; by JAK2" evidence="1">
    <location>
        <position position="1141"/>
    </location>
</feature>
<feature type="glycosylation site" description="N-linked (GlcNAc...) asparagine" evidence="21">
    <location>
        <position position="23"/>
    </location>
</feature>
<feature type="glycosylation site" description="N-linked (GlcNAc...) asparagine" evidence="21">
    <location>
        <position position="41"/>
    </location>
</feature>
<feature type="glycosylation site" description="N-linked (GlcNAc...) asparagine" evidence="21">
    <location>
        <position position="56"/>
    </location>
</feature>
<feature type="glycosylation site" description="N-linked (GlcNAc...) asparagine" evidence="21">
    <location>
        <position position="73"/>
    </location>
</feature>
<feature type="glycosylation site" description="N-linked (GlcNAc...) asparagine" evidence="21">
    <location>
        <position position="81"/>
    </location>
</feature>
<feature type="glycosylation site" description="N-linked (GlcNAc...) asparagine" evidence="21">
    <location>
        <position position="98"/>
    </location>
</feature>
<feature type="glycosylation site" description="N-linked (GlcNAc...) asparagine" evidence="21">
    <location>
        <position position="187"/>
    </location>
</feature>
<feature type="glycosylation site" description="N-linked (GlcNAc...) asparagine" evidence="21">
    <location>
        <position position="206"/>
    </location>
</feature>
<feature type="glycosylation site" description="N-linked (GlcNAc...) asparagine" evidence="6 8 21">
    <location>
        <position position="276"/>
    </location>
</feature>
<feature type="glycosylation site" description="N-linked (GlcNAc...) asparagine" evidence="21">
    <location>
        <position position="347"/>
    </location>
</feature>
<feature type="glycosylation site" description="N-linked (GlcNAc...) asparagine" evidence="8 21">
    <location>
        <position position="397"/>
    </location>
</feature>
<feature type="glycosylation site" description="N-linked (GlcNAc...) asparagine" evidence="6 21">
    <location>
        <position position="516"/>
    </location>
</feature>
<feature type="glycosylation site" description="N-linked (GlcNAc...) asparagine" evidence="21">
    <location>
        <position position="624"/>
    </location>
</feature>
<feature type="glycosylation site" description="N-linked (GlcNAc...) asparagine" evidence="21">
    <location>
        <position position="659"/>
    </location>
</feature>
<feature type="glycosylation site" description="N-linked (GlcNAc...) asparagine" evidence="21">
    <location>
        <position position="688"/>
    </location>
</feature>
<feature type="glycosylation site" description="N-linked (GlcNAc...) asparagine" evidence="21">
    <location>
        <position position="697"/>
    </location>
</feature>
<feature type="glycosylation site" description="N-linked (GlcNAc...) asparagine" evidence="21">
    <location>
        <position position="728"/>
    </location>
</feature>
<feature type="glycosylation site" description="N-linked (GlcNAc...) asparagine" evidence="21">
    <location>
        <position position="750"/>
    </location>
</feature>
<feature type="disulfide bond" evidence="9">
    <location>
        <begin position="37"/>
        <end position="90"/>
    </location>
</feature>
<feature type="disulfide bond" evidence="9">
    <location>
        <begin position="89"/>
        <end position="99"/>
    </location>
</feature>
<feature type="disulfide bond" evidence="9">
    <location>
        <begin position="131"/>
        <end position="142"/>
    </location>
</feature>
<feature type="disulfide bond" evidence="9">
    <location>
        <begin position="186"/>
        <end position="196"/>
    </location>
</feature>
<feature type="disulfide bond" evidence="9">
    <location>
        <begin position="188"/>
        <end position="193"/>
    </location>
</feature>
<feature type="disulfide bond" evidence="9">
    <location>
        <begin position="352"/>
        <end position="412"/>
    </location>
</feature>
<feature type="disulfide bond" evidence="9">
    <location>
        <begin position="413"/>
        <end position="418"/>
    </location>
</feature>
<feature type="disulfide bond" evidence="9">
    <location>
        <begin position="436"/>
        <end position="447"/>
    </location>
</feature>
<feature type="disulfide bond" evidence="9">
    <location>
        <begin position="473"/>
        <end position="528"/>
    </location>
</feature>
<feature type="disulfide bond" evidence="9">
    <location>
        <begin position="488"/>
        <end position="498"/>
    </location>
</feature>
<feature type="splice variant" id="VSP_001688" description="In isoform E." evidence="23">
    <location>
        <begin position="840"/>
        <end position="1165"/>
    </location>
</feature>
<feature type="splice variant" id="VSP_001691" description="In isoform C." evidence="24 25">
    <original>PETFEHLFIKHTASVTCGPLLLEPETISEDISVDTSWKNKDEMMPTTVVSLLSTTDLEKGSVCISDQ</original>
    <variation>MLEGSMFVKSHHHSLISSTQGHKHCGRPQGPLHRKTRDLCSLVYLLTLPPLLSYDPAKSPSVRNTQE</variation>
    <location>
        <begin position="892"/>
        <end position="958"/>
    </location>
</feature>
<feature type="splice variant" id="VSP_001693" description="In isoform D." evidence="24">
    <original>PETFEHLFIKHTASV</original>
    <variation>KMPGTKELLGGGWLT</variation>
    <location>
        <begin position="892"/>
        <end position="906"/>
    </location>
</feature>
<feature type="splice variant" id="VSP_001689" description="In isoform A." evidence="24 25 26">
    <original>PETFE</original>
    <variation>RTDIL</variation>
    <location>
        <begin position="892"/>
        <end position="896"/>
    </location>
</feature>
<feature type="splice variant" id="VSP_001690" description="In isoform A." evidence="24 25 26">
    <location>
        <begin position="897"/>
        <end position="1165"/>
    </location>
</feature>
<feature type="splice variant" id="VSP_001694" description="In isoform D." evidence="24">
    <location>
        <begin position="907"/>
        <end position="1165"/>
    </location>
</feature>
<feature type="splice variant" id="VSP_001692" description="In isoform C." evidence="24 25">
    <location>
        <begin position="959"/>
        <end position="1165"/>
    </location>
</feature>
<feature type="sequence variant" id="VAR_002703" description="In dbSNP:rs1137100." evidence="7 12 15 16 17 18 22">
    <original>K</original>
    <variation>R</variation>
    <location>
        <position position="109"/>
    </location>
</feature>
<feature type="sequence variant" id="VAR_049167" description="In dbSNP:rs35573508.">
    <original>D</original>
    <variation>G</variation>
    <location>
        <position position="124"/>
    </location>
</feature>
<feature type="sequence variant" id="VAR_002704" description="In dbSNP:rs146442768." evidence="15">
    <original>K</original>
    <variation>R</variation>
    <location>
        <position position="204"/>
    </location>
</feature>
<feature type="sequence variant" id="VAR_002705" description="In dbSNP:rs1137101." evidence="7 12 13 15 16 17 18 22">
    <original>Q</original>
    <variation>R</variation>
    <location>
        <position position="223"/>
    </location>
</feature>
<feature type="sequence variant" id="VAR_075723" description="In LEPRD; uncertain significance." evidence="11">
    <original>Y</original>
    <variation>H</variation>
    <location>
        <position position="422"/>
    </location>
</feature>
<feature type="sequence variant" id="VAR_028201" description="In dbSNP:rs13306526.">
    <original>I</original>
    <variation>V</variation>
    <location>
        <position position="503"/>
    </location>
</feature>
<feature type="sequence variant" id="VAR_075724" description="In LEPRD; uncertain significance." evidence="11">
    <original>C</original>
    <variation>G</variation>
    <location>
        <position position="604"/>
    </location>
</feature>
<feature type="sequence variant" id="VAR_002706" description="In dbSNP:rs1805094." evidence="15 17 18 22">
    <original>K</original>
    <variation>N</variation>
    <location>
        <position position="656"/>
    </location>
</feature>
<feature type="sequence variant" id="VAR_002707" description="In dbSNP:rs373154589." evidence="22">
    <original>S</original>
    <variation>T</variation>
    <location>
        <position position="675"/>
    </location>
</feature>
<feature type="sequence variant" id="VAR_049168" description="In dbSNP:rs34499590.">
    <original>T</original>
    <variation>M</variation>
    <location>
        <position position="699"/>
    </location>
</feature>
<feature type="sequence variant" id="VAR_075725" description="In LEPRD; uncertain significance; dbSNP:rs1303050393." evidence="11">
    <original>L</original>
    <variation>P</variation>
    <location>
        <position position="786"/>
    </location>
</feature>
<feature type="mutagenesis site" description="Greatly reduced PTPN11 binding; no PTPN11 phosphorylation; no effect on STAT3 phosphorylation." evidence="20">
    <original>Y</original>
    <variation>F</variation>
    <location>
        <position position="986"/>
    </location>
</feature>
<feature type="mutagenesis site" description="No effect on PTPN11 nor STAT3 phosphorylation." evidence="20">
    <original>YY</original>
    <variation>FF</variation>
    <location>
        <begin position="1078"/>
        <end position="1079"/>
    </location>
</feature>
<feature type="mutagenesis site" description="No effect on PTPN11 phosphorylation; no STAT3 phosphorylation." evidence="20">
    <original>Y</original>
    <variation>F</variation>
    <location>
        <position position="1141"/>
    </location>
</feature>
<feature type="sequence conflict" description="In Ref. 3; AAC50509/AAC50510/AAC50511." evidence="27" ref="3">
    <original>T</original>
    <variation>A</variation>
    <location>
        <position position="85"/>
    </location>
</feature>
<feature type="sequence conflict" description="In Ref. 1; AAA93015 and 4; AAB09673." evidence="27" ref="1 4">
    <original>D</original>
    <variation>A</variation>
    <location>
        <position position="976"/>
    </location>
</feature>
<feature type="strand" evidence="31">
    <location>
        <begin position="435"/>
        <end position="438"/>
    </location>
</feature>
<feature type="strand" evidence="31">
    <location>
        <begin position="445"/>
        <end position="449"/>
    </location>
</feature>
<feature type="strand" evidence="31">
    <location>
        <begin position="461"/>
        <end position="468"/>
    </location>
</feature>
<feature type="strand" evidence="31">
    <location>
        <begin position="484"/>
        <end position="486"/>
    </location>
</feature>
<feature type="strand" evidence="31">
    <location>
        <begin position="488"/>
        <end position="490"/>
    </location>
</feature>
<feature type="strand" evidence="31">
    <location>
        <begin position="496"/>
        <end position="500"/>
    </location>
</feature>
<feature type="strand" evidence="31">
    <location>
        <begin position="509"/>
        <end position="517"/>
    </location>
</feature>
<feature type="strand" evidence="31">
    <location>
        <begin position="527"/>
        <end position="529"/>
    </location>
</feature>
<feature type="helix" evidence="31">
    <location>
        <begin position="531"/>
        <end position="534"/>
    </location>
</feature>
<feature type="strand" evidence="31">
    <location>
        <begin position="544"/>
        <end position="548"/>
    </location>
</feature>
<feature type="turn" evidence="31">
    <location>
        <begin position="549"/>
        <end position="552"/>
    </location>
</feature>
<feature type="strand" evidence="31">
    <location>
        <begin position="553"/>
        <end position="557"/>
    </location>
</feature>
<feature type="strand" evidence="31">
    <location>
        <begin position="568"/>
        <end position="580"/>
    </location>
</feature>
<feature type="strand" evidence="31">
    <location>
        <begin position="584"/>
        <end position="588"/>
    </location>
</feature>
<feature type="strand" evidence="31">
    <location>
        <begin position="595"/>
        <end position="598"/>
    </location>
</feature>
<feature type="strand" evidence="31">
    <location>
        <begin position="607"/>
        <end position="615"/>
    </location>
</feature>
<feature type="helix" evidence="32">
    <location>
        <begin position="878"/>
        <end position="880"/>
    </location>
</feature>
<feature type="strand" evidence="32">
    <location>
        <begin position="881"/>
        <end position="883"/>
    </location>
</feature>
<name>LEPR_HUMAN</name>
<evidence type="ECO:0000250" key="1">
    <source>
        <dbReference type="UniProtKB" id="P48356"/>
    </source>
</evidence>
<evidence type="ECO:0000255" key="2"/>
<evidence type="ECO:0000255" key="3">
    <source>
        <dbReference type="PROSITE-ProRule" id="PRU00316"/>
    </source>
</evidence>
<evidence type="ECO:0000269" key="4">
    <source>
    </source>
</evidence>
<evidence type="ECO:0000269" key="5">
    <source>
    </source>
</evidence>
<evidence type="ECO:0000269" key="6">
    <source>
    </source>
</evidence>
<evidence type="ECO:0000269" key="7">
    <source>
    </source>
</evidence>
<evidence type="ECO:0000269" key="8">
    <source>
    </source>
</evidence>
<evidence type="ECO:0000269" key="9">
    <source>
    </source>
</evidence>
<evidence type="ECO:0000269" key="10">
    <source>
    </source>
</evidence>
<evidence type="ECO:0000269" key="11">
    <source>
    </source>
</evidence>
<evidence type="ECO:0000269" key="12">
    <source>
    </source>
</evidence>
<evidence type="ECO:0000269" key="13">
    <source>
    </source>
</evidence>
<evidence type="ECO:0000269" key="14">
    <source>
    </source>
</evidence>
<evidence type="ECO:0000269" key="15">
    <source>
    </source>
</evidence>
<evidence type="ECO:0000269" key="16">
    <source>
    </source>
</evidence>
<evidence type="ECO:0000269" key="17">
    <source>
    </source>
</evidence>
<evidence type="ECO:0000269" key="18">
    <source>
    </source>
</evidence>
<evidence type="ECO:0000269" key="19">
    <source>
    </source>
</evidence>
<evidence type="ECO:0000269" key="20">
    <source>
    </source>
</evidence>
<evidence type="ECO:0000269" key="21">
    <source>
    </source>
</evidence>
<evidence type="ECO:0000269" key="22">
    <source>
    </source>
</evidence>
<evidence type="ECO:0000303" key="23">
    <source>
    </source>
</evidence>
<evidence type="ECO:0000303" key="24">
    <source>
    </source>
</evidence>
<evidence type="ECO:0000303" key="25">
    <source>
    </source>
</evidence>
<evidence type="ECO:0000303" key="26">
    <source>
    </source>
</evidence>
<evidence type="ECO:0000305" key="27"/>
<evidence type="ECO:0000305" key="28">
    <source>
    </source>
</evidence>
<evidence type="ECO:0000305" key="29">
    <source>
    </source>
</evidence>
<evidence type="ECO:0007744" key="30">
    <source>
    </source>
</evidence>
<evidence type="ECO:0007829" key="31">
    <source>
        <dbReference type="PDB" id="3V6O"/>
    </source>
</evidence>
<evidence type="ECO:0007829" key="32">
    <source>
        <dbReference type="PDB" id="6E2P"/>
    </source>
</evidence>
<proteinExistence type="evidence at protein level"/>
<gene>
    <name type="primary">LEPR</name>
    <name type="synonym">DB</name>
    <name type="synonym">OBR</name>
</gene>
<accession>P48357</accession>
<accession>Q13592</accession>
<accession>Q13593</accession>
<accession>Q13594</accession>
<accession>Q92919</accession>
<accession>Q92920</accession>
<accession>Q92921</accession>
<sequence>MICQKFCVVLLHWEFIYVITAFNLSYPITPWRFKLSCMPPNSTYDYFLLPAGLSKNTSNSNGHYETAVEPKFNSSGTHFSNLSKTTFHCCFRSEQDRNCSLCADNIEGKTFVSTVNSLVFQQIDANWNIQCWLKGDLKLFICYVESLFKNLFRNYNYKVHLLYVLPEVLEDSPLVPQKGSFQMVHCNCSVHECCECLVPVPTAKLNDTLLMCLKITSGGVIFQSPLMSVQPINMVKPDPPLGLHMEITDDGNLKISWSSPPLVPFPLQYQVKYSENSTTVIREADKIVSATSLLVDSILPGSSYEVQVRGKRLDGPGIWSDWSTPRVFTTQDVIYFPPKILTSVGSNVSFHCIYKKENKIVPSKEIVWWMNLAEKIPQSQYDVVSDHVSKVTFFNLNETKPRGKFTYDAVYCCNEHECHHRYAELYVIDVNINISCETDGYLTKMTCRWSTSTIQSLAESTLQLRYHRSSLYCSDIPSIHPISEPKDCYLQSDGFYECIFQPIFLLSGYTMWIRINHSLGSLDSPPTCVLPDSVVKPLPPSSVKAEITINIGLLKISWEKPVFPENNLQFQIRYGLSGKEVQWKMYEVYDAKSKSVSLPVPDLCAVYAVQVRCKRLDGLGYWSNWSNPAYTVVMDIKVPMRGPEFWRIINGDTMKKEKNVTLLWKPLMKNDSLCSVQRYVINHHTSCNGTWSEDVGNHTKFTFLWTEQAHTVTVLAINSIGASVANFNLTFSWPMSKVNIVQSLSAYPLNSSCVIVSWILSPSDYKLMYFIIEWKNLNEDGEIKWLRISSSVKKYYIHDHFIPIEKYQFSLYPIFMEGVGKPKIINSFTQDDIEKHQSDAGLYVIVPVIISSSILLLGTLLISHQRMKKLFWEDVPNPKNCSWAQGLNFQKPETFEHLFIKHTASVTCGPLLLEPETISEDISVDTSWKNKDEMMPTTVVSLLSTTDLEKGSVCISDQFNSVNFSEAEGTEVTYEDESQRQPFVKYATLISNSKPSETGEEQGLINSSVTKCFSSKNSPLKDSFSNSSWEIEAQAFFILSDQHPNIISPHLTFSEGLDELLKLEGNFPEENNDKKSIYYLGVTSIKKRESGVLLTDKSRVSCPFPAPCLFTDIRVLQDSCSHFVENNINLGTSSKKTFASYMPQFQTCSTQTHKIMENKMCDLTV</sequence>
<comment type="function">
    <text evidence="1 4 9 10 14 19 29">Receptor for hormone LEP/leptin (Probable) (PubMed:22405007). On ligand binding, mediates LEP central and peripheral effects through the activation of different signaling pathways such as JAK2/STAT3 and MAPK cascade/FOS. In the hypothalamus, LEP acts as an appetite-regulating factor that induces a decrease in food intake and an increase in energy consumption by inducing anorexinogenic factors and suppressing orexigenic neuropeptides, also regulates bone mass and secretion of hypothalamo-pituitary-adrenal hormones (By similarity) (PubMed:9537324). In the periphery, increases basal metabolism, influences reproductive function, regulates pancreatic beta-cell function and insulin secretion, is pro-angiogenic and affects innate and adaptive immunity (PubMed:12504075, PubMed:25060689, PubMed:8805376). Control of energy homeostasis and melanocortin production (stimulation of POMC and full repression of AgRP transcription) is mediated by STAT3 signaling, whereas distinct signals regulate NPY and the control of fertility, growth and glucose homeostasis. Involved in the regulation of counter-regulatory response to hypoglycemia by inhibiting neurons of the parabrachial nucleus. Has a specific effect on T lymphocyte responses, differentially regulating the proliferation of naive and memory T -ells. Leptin increases Th1 and suppresses Th2 cytokine production (By similarity).</text>
</comment>
<comment type="function">
    <molecule>Isoform A</molecule>
    <text evidence="1">May transport LEP across the blood-brain barrier. Binds LEP and mediates LEP endocytosis. Does not induce phosphorylation of and activate STAT3.</text>
</comment>
<comment type="function">
    <molecule>Isoform E</molecule>
    <text evidence="1">Antagonizes Isoform A and isoform B-mediated LEP binding and endocytosis.</text>
</comment>
<comment type="subunit">
    <text evidence="1 20 29">Present as a mixture of monomers and dimers (Probable). The phosphorylated receptor binds a number of SH2 domain-containing proteins such as JAK2, STAT3, PTPN11, and SOCS3 (By similarity) (PubMed:9600917). Interaction with SOCS3 inhibits JAK/STAT signaling and MAPK cascade (By similarity).</text>
</comment>
<comment type="interaction">
    <interactant intactId="EBI-518596">
        <id>P48357</id>
    </interactant>
    <interactant intactId="EBI-401755">
        <id>P62993</id>
        <label>GRB2</label>
    </interactant>
    <organismsDiffer>false</organismsDiffer>
    <experiments>3</experiments>
</comment>
<comment type="interaction">
    <interactant intactId="EBI-518596">
        <id>P48357</id>
    </interactant>
    <interactant intactId="EBI-12994693">
        <id>P41159</id>
        <label>LEP</label>
    </interactant>
    <organismsDiffer>false</organismsDiffer>
    <experiments>3</experiments>
</comment>
<comment type="interaction">
    <interactant intactId="EBI-518596">
        <id>P48357</id>
    </interactant>
    <interactant intactId="EBI-15672507">
        <id>O15243</id>
        <label>LEPROT</label>
    </interactant>
    <organismsDiffer>false</organismsDiffer>
    <experiments>2</experiments>
</comment>
<comment type="interaction">
    <interactant intactId="EBI-7886250">
        <id>P48357-1</id>
    </interactant>
    <interactant intactId="EBI-7886250">
        <id>P48357-1</id>
        <label>LEPR</label>
    </interactant>
    <organismsDiffer>false</organismsDiffer>
    <experiments>3</experiments>
</comment>
<comment type="interaction">
    <interactant intactId="EBI-7886387">
        <id>P48357-2</id>
    </interactant>
    <interactant intactId="EBI-7886250">
        <id>P48357-1</id>
        <label>LEPR</label>
    </interactant>
    <organismsDiffer>false</organismsDiffer>
    <experiments>4</experiments>
</comment>
<comment type="interaction">
    <interactant intactId="EBI-7886448">
        <id>P48357-3</id>
    </interactant>
    <interactant intactId="EBI-7886250">
        <id>P48357-1</id>
        <label>LEPR</label>
    </interactant>
    <organismsDiffer>false</organismsDiffer>
    <experiments>4</experiments>
</comment>
<comment type="interaction">
    <interactant intactId="EBI-7886448">
        <id>P48357-3</id>
    </interactant>
    <interactant intactId="EBI-7886448">
        <id>P48357-3</id>
        <label>LEPR</label>
    </interactant>
    <organismsDiffer>false</organismsDiffer>
    <experiments>3</experiments>
</comment>
<comment type="interaction">
    <interactant intactId="EBI-7886448">
        <id>P48357-3</id>
    </interactant>
    <interactant intactId="EBI-3390054">
        <id>P0CG48</id>
        <label>UBC</label>
    </interactant>
    <organismsDiffer>false</organismsDiffer>
    <experiments>2</experiments>
</comment>
<comment type="subcellular location">
    <subcellularLocation>
        <location evidence="8">Cell membrane</location>
        <topology evidence="27">Single-pass type I membrane protein</topology>
    </subcellularLocation>
    <subcellularLocation>
        <location evidence="8">Basolateral cell membrane</location>
    </subcellularLocation>
</comment>
<comment type="subcellular location">
    <molecule>Isoform E</molecule>
    <subcellularLocation>
        <location evidence="1">Secreted</location>
    </subcellularLocation>
</comment>
<comment type="alternative products">
    <event type="alternative splicing"/>
    <isoform>
        <id>P48357-1</id>
        <name>B</name>
        <name>13.2</name>
        <name>OBRb</name>
        <sequence type="displayed"/>
    </isoform>
    <isoform>
        <id>P48357-2</id>
        <name>A</name>
        <name>6.4</name>
        <name>HuB219.3</name>
        <sequence type="described" ref="VSP_001689 VSP_001690"/>
    </isoform>
    <isoform>
        <id>P48357-3</id>
        <name>C</name>
        <name>12.1</name>
        <name>OBRa</name>
        <sequence type="described" ref="VSP_001691 VSP_001692"/>
    </isoform>
    <isoform>
        <id>P48357-4</id>
        <name>D</name>
        <name>HuB219.2</name>
        <sequence type="described" ref="VSP_001693 VSP_001694"/>
    </isoform>
    <isoform>
        <id>P48357-5</id>
        <name>E</name>
        <sequence type="described" ref="VSP_001688"/>
    </isoform>
</comment>
<comment type="tissue specificity">
    <text evidence="4 5 8">Isoform A is expressed in fetal liver and in hematopoietic tissues and choroid plexus. In adults highest expression in heart, liver, small intestine, prostate and ovary. Low level in lung and kidney. Isoform B is highly expressed in hypothalamus, but also in skeletal muscle. Detected in fundic and antral epithelial cells of the gastric mucosa (PubMed:19159218). Isoform B and isoform A are expressed by NK cells (at protein level) (PubMed:12504075).</text>
</comment>
<comment type="domain">
    <text>The cytoplasmic domain may be essential for intracellular signal transduction by activation of JAK tyrosine kinase and STATs.</text>
</comment>
<comment type="domain">
    <text>The WSXWS motif appears to be necessary for proper protein folding and thereby efficient intracellular transport and cell-surface receptor binding.</text>
</comment>
<comment type="domain">
    <text>The box 1 motif is required for JAK interaction and/or activation.</text>
</comment>
<comment type="PTM">
    <text evidence="1">On ligand binding, phosphorylated on two conserved C-terminal tyrosine residues (isoform B only) by JAK2. Tyr-986 is required for complete binding and activation of PTPN11, ERK/FOS activation,for interaction with SOCS3 and SOCS3 mediated inhibition of leptin signaling. Phosphorylation on Tyr-1141 is required for STAT3 binding/activation. Phosphorylation of Tyr-1079 has a more accessory role.</text>
</comment>
<comment type="disease" evidence="11 19">
    <disease id="DI-03638">
        <name>Leptin receptor deficiency</name>
        <acronym>LEPRD</acronym>
        <description>A rare disease characterized by normal levels of serum leptin, hyperphagia and severe obesity from an early age. Additional features include alterations in immune function, and delayed puberty due to hypogonadotropic hypogonadism.</description>
        <dbReference type="MIM" id="614963"/>
    </disease>
    <text>The disease is caused by variants affecting the gene represented in this entry.</text>
</comment>
<comment type="similarity">
    <text evidence="27">Belongs to the type I cytokine receptor family. Type 2 subfamily.</text>
</comment>
<organism>
    <name type="scientific">Homo sapiens</name>
    <name type="common">Human</name>
    <dbReference type="NCBI Taxonomy" id="9606"/>
    <lineage>
        <taxon>Eukaryota</taxon>
        <taxon>Metazoa</taxon>
        <taxon>Chordata</taxon>
        <taxon>Craniata</taxon>
        <taxon>Vertebrata</taxon>
        <taxon>Euteleostomi</taxon>
        <taxon>Mammalia</taxon>
        <taxon>Eutheria</taxon>
        <taxon>Euarchontoglires</taxon>
        <taxon>Primates</taxon>
        <taxon>Haplorrhini</taxon>
        <taxon>Catarrhini</taxon>
        <taxon>Hominidae</taxon>
        <taxon>Homo</taxon>
    </lineage>
</organism>
<reference key="1">
    <citation type="journal article" date="1995" name="Cell">
        <title>Identification and expression cloning of a leptin receptor, OB-R.</title>
        <authorList>
            <person name="Tartaglia L.A."/>
            <person name="Dembski M."/>
            <person name="Weng X."/>
            <person name="Deng N."/>
            <person name="Culpepper J."/>
            <person name="Devos R."/>
            <person name="Richards G.J."/>
            <person name="Campfield L.A."/>
            <person name="Clark F.T."/>
            <person name="Deeds J."/>
            <person name="Muir C."/>
            <person name="Sanker S."/>
            <person name="Moriarty A."/>
            <person name="Moore K.J."/>
            <person name="Smutko J.S."/>
            <person name="Mays G.G."/>
            <person name="Woolf E.A."/>
            <person name="Monroe C.A."/>
            <person name="Tepper R.I."/>
        </authorList>
    </citation>
    <scope>NUCLEOTIDE SEQUENCE [MRNA] (ISOFORMS B AND E)</scope>
    <source>
        <tissue>Brain</tissue>
    </source>
</reference>
<reference key="2">
    <citation type="journal article" date="1996" name="Curr. Biol.">
        <title>A role for leptin and its cognate receptor in hematopoiesis.</title>
        <authorList>
            <person name="Bennett B.D."/>
            <person name="Solar G.P."/>
            <person name="Yuan J.Q."/>
            <person name="Mathias J."/>
            <person name="Thomas G.R."/>
            <person name="Matthews W."/>
        </authorList>
    </citation>
    <scope>NUCLEOTIDE SEQUENCE [MRNA] (ISOFORMS A; B AND C)</scope>
    <scope>FUNCTION</scope>
    <source>
        <tissue>Fetal liver</tissue>
    </source>
</reference>
<reference key="3">
    <citation type="journal article" date="1996" name="Nat. Med.">
        <title>Novel B219/OB receptor isoforms: possible role of leptin in hematopoiesis and reproduction.</title>
        <authorList>
            <person name="Cioffi J.A."/>
            <person name="Shafer A.W."/>
            <person name="Zupancic T.J."/>
            <person name="Smith-Gbur J."/>
            <person name="Mikhail A."/>
            <person name="Platika D."/>
            <person name="Snodgrass H.R."/>
        </authorList>
    </citation>
    <scope>NUCLEOTIDE SEQUENCE [MRNA] (ISOFORMS A; C AND D)</scope>
    <scope>VARIANTS ARG-109 AND ARG-223</scope>
    <source>
        <tissue>Fetal liver</tissue>
    </source>
</reference>
<reference key="4">
    <citation type="journal article" date="1997" name="Hum. Mol. Genet.">
        <title>Structure and sequence variation at the human leptin receptor gene in lean and obese Pima Indians.</title>
        <authorList>
            <person name="Thompson D.B."/>
            <person name="Ravussin E."/>
            <person name="Bennett P.H."/>
            <person name="Bogardus C."/>
        </authorList>
    </citation>
    <scope>NUCLEOTIDE SEQUENCE [GENOMIC DNA] (ISOFORM B)</scope>
    <scope>VARIANTS ARG-109 AND ARG-223</scope>
</reference>
<reference key="5">
    <citation type="journal article" date="1997" name="J. Mol. Endocrinol.">
        <title>Cloning and characterization of a human leptin receptor using a biologically active leptin immunoadhesin.</title>
        <authorList>
            <person name="Luoh S.-M."/>
            <person name="Di Marco F."/>
            <person name="Levin N."/>
            <person name="Armanini M."/>
            <person name="Xie M.H."/>
            <person name="Nelson C."/>
            <person name="Bennett G.L."/>
            <person name="Williams M."/>
            <person name="Spencer S.A."/>
            <person name="Gurney A."/>
            <person name="de Sauvage F.J."/>
        </authorList>
    </citation>
    <scope>NUCLEOTIDE SEQUENCE [MRNA] (ISOFORM A)</scope>
</reference>
<reference key="6">
    <citation type="journal article" date="1998" name="Nature">
        <title>A mutation in the human leptin receptor gene causes obesity and pituitary dysfunction.</title>
        <authorList>
            <person name="Clement K."/>
            <person name="Vaisse C."/>
            <person name="Lahlou N."/>
            <person name="Cabrol S."/>
            <person name="Pelloux V."/>
            <person name="Cassuto D."/>
            <person name="Gourmelen M."/>
            <person name="Dina C."/>
            <person name="Chambaz J."/>
            <person name="Lacorte J.M."/>
            <person name="Basdevant A."/>
            <person name="Bougneres P."/>
            <person name="Lebouc Y."/>
            <person name="Froguel P."/>
            <person name="Guy-Grand B."/>
        </authorList>
    </citation>
    <scope>INVOLVEMENT IN LEPRD</scope>
    <scope>FUNCTION</scope>
</reference>
<reference key="7">
    <citation type="journal article" date="1999" name="J. Mol. Evol.">
        <title>The long terminal repeat of an endogenous retrovirus induces alternative splicing and encodes an additional carboxy-terminal sequence in the human leptin receptor.</title>
        <authorList>
            <person name="Kapitonov V.V."/>
            <person name="Jurka J."/>
        </authorList>
    </citation>
    <scope>ALTERNATIVE SPLICING DUE TO AN ENDOGENOUS RETROVIRUS</scope>
</reference>
<reference key="8">
    <citation type="journal article" date="1998" name="Proc. Natl. Acad. Sci. U.S.A.">
        <title>Enhancing leptin response by preventing SH2-containing phosphatase 2 interaction with Ob receptor.</title>
        <authorList>
            <person name="Carpenter L.R."/>
            <person name="Farruggella T.J."/>
            <person name="Symes A."/>
            <person name="Karow M.L."/>
            <person name="Yancopoulos G.D."/>
            <person name="Stahl N."/>
        </authorList>
    </citation>
    <scope>INTERACTION WITH PTPN11</scope>
    <scope>MUTAGENESIS OF TYR-986; 1078-TYR-TYR-1079 AND TYR-1141</scope>
</reference>
<reference key="9">
    <citation type="journal article" date="1998" name="J. Biol. Chem.">
        <title>Human leptin receptor. Determination of disulfide structure and N-glycosylation sites of the extracellular domain.</title>
        <authorList>
            <person name="Haniu M."/>
            <person name="Arakawa T."/>
            <person name="Bures E.J."/>
            <person name="Young Y."/>
            <person name="Hui J.O."/>
            <person name="Rohde M.F."/>
            <person name="Welcher A.A."/>
            <person name="Horan T."/>
        </authorList>
    </citation>
    <scope>GLYCOSYLATION AT ASN-23; ASN-41; ASN-56; ASN-73; ASN-81; ASN-98; ASN-187; ASN-206; ASN-276; ASN-347; ASN-397; ASN-516; ASN-624; ASN-659; ASN-688; ASN-697; ASN-728 AND ASN-750</scope>
    <scope>DISULFIDE BONDS</scope>
    <scope>PARTIAL PROTEIN SEQUENCE</scope>
</reference>
<reference key="10">
    <citation type="journal article" date="2000" name="Gut">
        <title>Leptin secretion and leptin receptor in the human stomach.</title>
        <authorList>
            <person name="Sobhani I."/>
            <person name="Bado A."/>
            <person name="Vissuzaine C."/>
            <person name="Buyse M."/>
            <person name="Kermorgant S."/>
            <person name="Laigneau J.P."/>
            <person name="Attoub S."/>
            <person name="Lehy T."/>
            <person name="Henin D."/>
            <person name="Mignon M."/>
            <person name="Lewin M.J."/>
        </authorList>
    </citation>
    <scope>TISSUE SPECIFICITY</scope>
    <scope>SUBCELLULAR LOCATION</scope>
</reference>
<reference key="11">
    <citation type="journal article" date="2003" name="Biochem. Biophys. Res. Commun.">
        <title>Expression of leptin receptors and response to leptin stimulation of human natural killer cell lines.</title>
        <authorList>
            <person name="Zhao Y."/>
            <person name="Sun R."/>
            <person name="You L."/>
            <person name="Gao C."/>
            <person name="Tian Z."/>
        </authorList>
    </citation>
    <scope>FUNCTION</scope>
    <scope>TISSUE SPECIFICITY</scope>
</reference>
<reference key="12">
    <citation type="journal article" date="2005" name="J. Cell. Biochem.">
        <title>Leptin expression in human primary skeletal muscle cells is reduced during differentiation.</title>
        <authorList>
            <person name="Solberg R."/>
            <person name="Aas V."/>
            <person name="Thoresen G.H."/>
            <person name="Kase E.T."/>
            <person name="Drevon C.A."/>
            <person name="Rustan A.C."/>
            <person name="Reseland J.E."/>
        </authorList>
    </citation>
    <scope>TISSUE SPECIFICITY</scope>
</reference>
<reference key="13">
    <citation type="journal article" date="2005" name="J. Proteome Res.">
        <title>Human plasma N-glycoproteome analysis by immunoaffinity subtraction, hydrazide chemistry, and mass spectrometry.</title>
        <authorList>
            <person name="Liu T."/>
            <person name="Qian W.-J."/>
            <person name="Gritsenko M.A."/>
            <person name="Camp D.G. II"/>
            <person name="Monroe M.E."/>
            <person name="Moore R.J."/>
            <person name="Smith R.D."/>
        </authorList>
    </citation>
    <scope>GLYCOSYLATION [LARGE SCALE ANALYSIS] AT ASN-276 AND ASN-516</scope>
    <source>
        <tissue>Plasma</tissue>
    </source>
</reference>
<reference key="14">
    <citation type="journal article" date="2009" name="J. Proteome Res.">
        <title>Glycoproteomics analysis of human liver tissue by combination of multiple enzyme digestion and hydrazide chemistry.</title>
        <authorList>
            <person name="Chen R."/>
            <person name="Jiang X."/>
            <person name="Sun D."/>
            <person name="Han G."/>
            <person name="Wang F."/>
            <person name="Ye M."/>
            <person name="Wang L."/>
            <person name="Zou H."/>
        </authorList>
    </citation>
    <scope>GLYCOSYLATION [LARGE SCALE ANALYSIS] AT ASN-276 AND ASN-397</scope>
    <source>
        <tissue>Liver</tissue>
    </source>
</reference>
<reference key="15">
    <citation type="journal article" date="2014" name="J. Endocrinol.">
        <title>20 years of leptin: connecting leptin signaling to biological function.</title>
        <authorList>
            <person name="Allison M.B."/>
            <person name="Myers M.G. Jr."/>
        </authorList>
    </citation>
    <scope>REVIEW ON FUNCTION</scope>
    <scope>SUBUNIT</scope>
</reference>
<reference key="16">
    <citation type="journal article" date="2014" name="J. Proteomics">
        <title>An enzyme assisted RP-RPLC approach for in-depth analysis of human liver phosphoproteome.</title>
        <authorList>
            <person name="Bian Y."/>
            <person name="Song C."/>
            <person name="Cheng K."/>
            <person name="Dong M."/>
            <person name="Wang F."/>
            <person name="Huang J."/>
            <person name="Sun D."/>
            <person name="Wang L."/>
            <person name="Ye M."/>
            <person name="Zou H."/>
        </authorList>
    </citation>
    <scope>PHOSPHORYLATION [LARGE SCALE ANALYSIS] AT SER-882</scope>
    <scope>IDENTIFICATION BY MASS SPECTROMETRY [LARGE SCALE ANALYSIS]</scope>
    <source>
        <tissue>Liver</tissue>
    </source>
</reference>
<reference key="17">
    <citation type="journal article" date="2014" name="Metabolism">
        <title>Leptin modulates autophagy in human CD4+CD25- conventional T cells.</title>
        <authorList>
            <person name="Cassano S."/>
            <person name="Pucino V."/>
            <person name="La Rocca C."/>
            <person name="Procaccini C."/>
            <person name="De Rosa V."/>
            <person name="Marone G."/>
            <person name="Matarese G."/>
        </authorList>
    </citation>
    <scope>FUNCTION</scope>
</reference>
<reference key="18">
    <citation type="journal article" date="2012" name="Structure">
        <title>Structure of the human obesity receptor leptin-binding domain reveals the mechanism of leptin antagonism by a monoclonal antibody.</title>
        <authorList>
            <person name="Carpenter B."/>
            <person name="Hemsworth G.R."/>
            <person name="Wu Z."/>
            <person name="Maamra M."/>
            <person name="Strasburger C.J."/>
            <person name="Ross R.J."/>
            <person name="Artymiuk P.J."/>
        </authorList>
    </citation>
    <scope>X-RAY CRYSTALLOGRAPHY (1.95 ANGSTROMS) OF 428-633 IN COMPLEX WITH ANTIBODY</scope>
    <scope>LEPTIN-BINDING REGION</scope>
    <scope>DISULFIDE BONDS</scope>
    <scope>FUNCTION</scope>
</reference>
<reference key="19">
    <citation type="journal article" date="1996" name="Diabetes">
        <title>The hypothalamic leptin receptor in humans: identification of incidental sequence polymorphisms and absence of the db/db mouse and fa/fa rat mutations.</title>
        <authorList>
            <person name="Considine R.V."/>
            <person name="Considine E.L."/>
            <person name="Williams C.J."/>
            <person name="Hyde T.M."/>
            <person name="Caro J.F."/>
        </authorList>
    </citation>
    <scope>VARIANT ARG-223</scope>
</reference>
<reference key="20">
    <citation type="journal article" date="1997" name="Biochem. Biophys. Res. Commun.">
        <title>Amino acid variants in the human leptin receptor: lack of association to juvenile onset obesity.</title>
        <authorList>
            <person name="Echwald S.M."/>
            <person name="Soerensen T.D."/>
            <person name="Soerensen T.I."/>
            <person name="Tybjaerg-Hansen A."/>
            <person name="Andersen T."/>
            <person name="Chung W.K."/>
            <person name="Leibel R.L."/>
            <person name="Pedersen O."/>
        </authorList>
    </citation>
    <scope>VARIANTS ARG-109; ARG-204; ARG-223 AND ASN-656</scope>
</reference>
<reference key="21">
    <citation type="journal article" date="1997" name="Diabetes">
        <title>Exonic and intronic sequence variation in the human leptin receptor gene (LEPR).</title>
        <authorList>
            <person name="Chung W.K."/>
            <person name="Power-Kehoe L."/>
            <person name="Chua M."/>
            <person name="Chu F."/>
            <person name="Aronne L."/>
            <person name="Huma Z."/>
            <person name="Sothern M."/>
            <person name="Udall J.N."/>
            <person name="Kahle B."/>
            <person name="Leibel R.L."/>
        </authorList>
    </citation>
    <scope>VARIANTS ARG-109; ARG-223 AND ASN-656</scope>
</reference>
<reference key="22">
    <citation type="journal article" date="1997" name="Hum. Mol. Genet.">
        <title>Leptin receptor gene variation and obesity: lack of association in a white British male population.</title>
        <authorList>
            <person name="Gotoda T."/>
            <person name="Manning B.S."/>
            <person name="Goldstone A.P."/>
            <person name="Imrie H."/>
            <person name="Evans A.L."/>
            <person name="Strosberg A.D."/>
            <person name="McKeigue P.M."/>
            <person name="Scott J."/>
            <person name="Aitman T.J."/>
        </authorList>
    </citation>
    <scope>VARIANTS ARG-109; ARG-223 AND ASN-656</scope>
</reference>
<reference key="23">
    <citation type="journal article" date="1998" name="Hum. Genet.">
        <title>Transmission disequilibrium and sequence variants at the leptin receptor gene in extremely obese German children and adolescents.</title>
        <authorList>
            <person name="Roth H."/>
            <person name="Korn T."/>
            <person name="Rosenkranz K."/>
            <person name="Hinney A."/>
            <person name="Ziegler A."/>
            <person name="Kunz J."/>
            <person name="Siegfried W."/>
            <person name="Mayer H."/>
            <person name="Hebebrand J."/>
            <person name="Grzeschik K.-H."/>
        </authorList>
    </citation>
    <scope>VARIANTS ARG-109; ARG-223; ASN-656 AND THR-675</scope>
</reference>
<reference key="24">
    <citation type="journal article" date="2008" name="Nature">
        <title>DNA sequencing of a cytogenetically normal acute myeloid leukaemia genome.</title>
        <authorList>
            <person name="Ley T.J."/>
            <person name="Mardis E.R."/>
            <person name="Ding L."/>
            <person name="Fulton B."/>
            <person name="McLellan M.D."/>
            <person name="Chen K."/>
            <person name="Dooling D."/>
            <person name="Dunford-Shore B.H."/>
            <person name="McGrath S."/>
            <person name="Hickenbotham M."/>
            <person name="Cook L."/>
            <person name="Abbott R."/>
            <person name="Larson D.E."/>
            <person name="Koboldt D.C."/>
            <person name="Pohl C."/>
            <person name="Smith S."/>
            <person name="Hawkins A."/>
            <person name="Abbott S."/>
            <person name="Locke D."/>
            <person name="Hillier L.W."/>
            <person name="Miner T."/>
            <person name="Fulton L."/>
            <person name="Magrini V."/>
            <person name="Wylie T."/>
            <person name="Glasscock J."/>
            <person name="Conyers J."/>
            <person name="Sander N."/>
            <person name="Shi X."/>
            <person name="Osborne J.R."/>
            <person name="Minx P."/>
            <person name="Gordon D."/>
            <person name="Chinwalla A."/>
            <person name="Zhao Y."/>
            <person name="Ries R.E."/>
            <person name="Payton J.E."/>
            <person name="Westervelt P."/>
            <person name="Tomasson M.H."/>
            <person name="Watson M."/>
            <person name="Baty J."/>
            <person name="Ivanovich J."/>
            <person name="Heath S."/>
            <person name="Shannon W.D."/>
            <person name="Nagarajan R."/>
            <person name="Walter M.J."/>
            <person name="Link D.C."/>
            <person name="Graubert T.A."/>
            <person name="DiPersio J.F."/>
            <person name="Wilson R.K."/>
        </authorList>
    </citation>
    <scope>VARIANTS [LARGE SCALE ANALYSIS] ARG-109 AND ARG-223</scope>
</reference>
<reference key="25">
    <citation type="journal article" date="2015" name="J. Clin. Endocrinol. Metab.">
        <title>Seven novel deleterious LEPR mutations found in early-onset obesity: a DeltaExon6-8 shared by subjects from Reunion Island, France, suggests a founder effect.</title>
        <authorList>
            <person name="Huvenne H."/>
            <person name="Le Beyec J."/>
            <person name="Pepin D."/>
            <person name="Alili R."/>
            <person name="Kherchiche P.P."/>
            <person name="Jeannic E."/>
            <person name="Frelut M.L."/>
            <person name="Lacorte J.M."/>
            <person name="Nicolino M."/>
            <person name="Viard A."/>
            <person name="Laville M."/>
            <person name="Ledoux S."/>
            <person name="Tounian P."/>
            <person name="Poitou C."/>
            <person name="Dubern B."/>
            <person name="Clement K."/>
        </authorList>
    </citation>
    <scope>VARIANTS LEPRD HIS-422; GLY-604 AND PRO-786</scope>
</reference>
<keyword id="KW-0002">3D-structure</keyword>
<keyword id="KW-0025">Alternative splicing</keyword>
<keyword id="KW-1003">Cell membrane</keyword>
<keyword id="KW-0903">Direct protein sequencing</keyword>
<keyword id="KW-1015">Disulfide bond</keyword>
<keyword id="KW-0325">Glycoprotein</keyword>
<keyword id="KW-0393">Immunoglobulin domain</keyword>
<keyword id="KW-0472">Membrane</keyword>
<keyword id="KW-0550">Obesity</keyword>
<keyword id="KW-0597">Phosphoprotein</keyword>
<keyword id="KW-1267">Proteomics identification</keyword>
<keyword id="KW-0675">Receptor</keyword>
<keyword id="KW-1185">Reference proteome</keyword>
<keyword id="KW-0677">Repeat</keyword>
<keyword id="KW-0964">Secreted</keyword>
<keyword id="KW-0732">Signal</keyword>
<keyword id="KW-0812">Transmembrane</keyword>
<keyword id="KW-1133">Transmembrane helix</keyword>